<keyword id="KW-1185">Reference proteome</keyword>
<keyword id="KW-0687">Ribonucleoprotein</keyword>
<keyword id="KW-0689">Ribosomal protein</keyword>
<sequence length="116" mass="13070">MSNIIKQLEQEQLKQNVPSFRPGDTLEVKVWVVEGSKRRLQAFEGVVIAIRNRGLHSAFTLRKVSNGVGVERVFQTHSPAVDSIAVKRKGAVRKAKLYYLRERSGKSARIKERLGA</sequence>
<organism>
    <name type="scientific">Haemophilus influenzae (strain ATCC 51907 / DSM 11121 / KW20 / Rd)</name>
    <dbReference type="NCBI Taxonomy" id="71421"/>
    <lineage>
        <taxon>Bacteria</taxon>
        <taxon>Pseudomonadati</taxon>
        <taxon>Pseudomonadota</taxon>
        <taxon>Gammaproteobacteria</taxon>
        <taxon>Pasteurellales</taxon>
        <taxon>Pasteurellaceae</taxon>
        <taxon>Haemophilus</taxon>
    </lineage>
</organism>
<comment type="function">
    <text evidence="1">This protein is located at the 30S-50S ribosomal subunit interface and may play a role in the structure and function of the aminoacyl-tRNA binding site.</text>
</comment>
<comment type="similarity">
    <text evidence="2">Belongs to the bacterial ribosomal protein bL19 family.</text>
</comment>
<name>RL19_HAEIN</name>
<proteinExistence type="inferred from homology"/>
<protein>
    <recommendedName>
        <fullName evidence="2">Large ribosomal subunit protein bL19</fullName>
    </recommendedName>
    <alternativeName>
        <fullName>50S ribosomal protein L19</fullName>
    </alternativeName>
</protein>
<dbReference type="EMBL" id="L42023">
    <property type="protein sequence ID" value="AAC21870.1"/>
    <property type="molecule type" value="Genomic_DNA"/>
</dbReference>
<dbReference type="PIR" id="B64054">
    <property type="entry name" value="B64054"/>
</dbReference>
<dbReference type="RefSeq" id="NP_438370.2">
    <property type="nucleotide sequence ID" value="NC_000907.1"/>
</dbReference>
<dbReference type="SMR" id="P44357"/>
<dbReference type="STRING" id="71421.HI_0201"/>
<dbReference type="EnsemblBacteria" id="AAC21870">
    <property type="protein sequence ID" value="AAC21870"/>
    <property type="gene ID" value="HI_0201"/>
</dbReference>
<dbReference type="KEGG" id="hin:HI_0201"/>
<dbReference type="PATRIC" id="fig|71421.8.peg.206"/>
<dbReference type="eggNOG" id="COG0335">
    <property type="taxonomic scope" value="Bacteria"/>
</dbReference>
<dbReference type="HOGENOM" id="CLU_103507_2_2_6"/>
<dbReference type="OrthoDB" id="9803541at2"/>
<dbReference type="PhylomeDB" id="P44357"/>
<dbReference type="BioCyc" id="HINF71421:G1GJ1-212-MONOMER"/>
<dbReference type="Proteomes" id="UP000000579">
    <property type="component" value="Chromosome"/>
</dbReference>
<dbReference type="GO" id="GO:0022625">
    <property type="term" value="C:cytosolic large ribosomal subunit"/>
    <property type="evidence" value="ECO:0000318"/>
    <property type="project" value="GO_Central"/>
</dbReference>
<dbReference type="GO" id="GO:0003735">
    <property type="term" value="F:structural constituent of ribosome"/>
    <property type="evidence" value="ECO:0000318"/>
    <property type="project" value="GO_Central"/>
</dbReference>
<dbReference type="GO" id="GO:0006412">
    <property type="term" value="P:translation"/>
    <property type="evidence" value="ECO:0007669"/>
    <property type="project" value="UniProtKB-UniRule"/>
</dbReference>
<dbReference type="FunFam" id="2.30.30.790:FF:000001">
    <property type="entry name" value="50S ribosomal protein L19"/>
    <property type="match status" value="1"/>
</dbReference>
<dbReference type="Gene3D" id="2.30.30.790">
    <property type="match status" value="1"/>
</dbReference>
<dbReference type="HAMAP" id="MF_00402">
    <property type="entry name" value="Ribosomal_bL19"/>
    <property type="match status" value="1"/>
</dbReference>
<dbReference type="InterPro" id="IPR001857">
    <property type="entry name" value="Ribosomal_bL19"/>
</dbReference>
<dbReference type="InterPro" id="IPR018257">
    <property type="entry name" value="Ribosomal_bL19_CS"/>
</dbReference>
<dbReference type="InterPro" id="IPR038657">
    <property type="entry name" value="Ribosomal_bL19_sf"/>
</dbReference>
<dbReference type="InterPro" id="IPR008991">
    <property type="entry name" value="Translation_prot_SH3-like_sf"/>
</dbReference>
<dbReference type="NCBIfam" id="TIGR01024">
    <property type="entry name" value="rplS_bact"/>
    <property type="match status" value="1"/>
</dbReference>
<dbReference type="PANTHER" id="PTHR15680:SF9">
    <property type="entry name" value="LARGE RIBOSOMAL SUBUNIT PROTEIN BL19M"/>
    <property type="match status" value="1"/>
</dbReference>
<dbReference type="PANTHER" id="PTHR15680">
    <property type="entry name" value="RIBOSOMAL PROTEIN L19"/>
    <property type="match status" value="1"/>
</dbReference>
<dbReference type="Pfam" id="PF01245">
    <property type="entry name" value="Ribosomal_L19"/>
    <property type="match status" value="1"/>
</dbReference>
<dbReference type="PIRSF" id="PIRSF002191">
    <property type="entry name" value="Ribosomal_L19"/>
    <property type="match status" value="1"/>
</dbReference>
<dbReference type="PRINTS" id="PR00061">
    <property type="entry name" value="RIBOSOMALL19"/>
</dbReference>
<dbReference type="SUPFAM" id="SSF50104">
    <property type="entry name" value="Translation proteins SH3-like domain"/>
    <property type="match status" value="1"/>
</dbReference>
<dbReference type="PROSITE" id="PS01015">
    <property type="entry name" value="RIBOSOMAL_L19"/>
    <property type="match status" value="1"/>
</dbReference>
<gene>
    <name type="primary">rplS</name>
    <name type="synonym">rpl19</name>
    <name type="ordered locus">HI_0201</name>
</gene>
<evidence type="ECO:0000250" key="1"/>
<evidence type="ECO:0000305" key="2"/>
<reference key="1">
    <citation type="journal article" date="1995" name="Science">
        <title>Whole-genome random sequencing and assembly of Haemophilus influenzae Rd.</title>
        <authorList>
            <person name="Fleischmann R.D."/>
            <person name="Adams M.D."/>
            <person name="White O."/>
            <person name="Clayton R.A."/>
            <person name="Kirkness E.F."/>
            <person name="Kerlavage A.R."/>
            <person name="Bult C.J."/>
            <person name="Tomb J.-F."/>
            <person name="Dougherty B.A."/>
            <person name="Merrick J.M."/>
            <person name="McKenney K."/>
            <person name="Sutton G.G."/>
            <person name="FitzHugh W."/>
            <person name="Fields C.A."/>
            <person name="Gocayne J.D."/>
            <person name="Scott J.D."/>
            <person name="Shirley R."/>
            <person name="Liu L.-I."/>
            <person name="Glodek A."/>
            <person name="Kelley J.M."/>
            <person name="Weidman J.F."/>
            <person name="Phillips C.A."/>
            <person name="Spriggs T."/>
            <person name="Hedblom E."/>
            <person name="Cotton M.D."/>
            <person name="Utterback T.R."/>
            <person name="Hanna M.C."/>
            <person name="Nguyen D.T."/>
            <person name="Saudek D.M."/>
            <person name="Brandon R.C."/>
            <person name="Fine L.D."/>
            <person name="Fritchman J.L."/>
            <person name="Fuhrmann J.L."/>
            <person name="Geoghagen N.S.M."/>
            <person name="Gnehm C.L."/>
            <person name="McDonald L.A."/>
            <person name="Small K.V."/>
            <person name="Fraser C.M."/>
            <person name="Smith H.O."/>
            <person name="Venter J.C."/>
        </authorList>
    </citation>
    <scope>NUCLEOTIDE SEQUENCE [LARGE SCALE GENOMIC DNA]</scope>
    <source>
        <strain>ATCC 51907 / DSM 11121 / KW20 / Rd</strain>
    </source>
</reference>
<accession>P44357</accession>
<feature type="initiator methionine" description="Removed" evidence="1">
    <location>
        <position position="1"/>
    </location>
</feature>
<feature type="chain" id="PRO_0000163463" description="Large ribosomal subunit protein bL19">
    <location>
        <begin position="2"/>
        <end position="116"/>
    </location>
</feature>